<feature type="chain" id="PRO_0000210398" description="Uncharacterized protein MG055 homolog">
    <location>
        <begin position="1"/>
        <end position="125"/>
    </location>
</feature>
<feature type="transmembrane region" description="Helical" evidence="1">
    <location>
        <begin position="92"/>
        <end position="112"/>
    </location>
</feature>
<feature type="region of interest" description="Disordered" evidence="2">
    <location>
        <begin position="36"/>
        <end position="57"/>
    </location>
</feature>
<comment type="subcellular location">
    <subcellularLocation>
        <location evidence="3">Membrane</location>
        <topology evidence="3">Single-pass membrane protein</topology>
    </subcellularLocation>
</comment>
<keyword id="KW-0472">Membrane</keyword>
<keyword id="KW-1185">Reference proteome</keyword>
<keyword id="KW-0812">Transmembrane</keyword>
<keyword id="KW-1133">Transmembrane helix</keyword>
<gene>
    <name type="ordered locus">MPN_068</name>
    <name type="ORF">D09_orf125</name>
    <name type="ORF">MP086</name>
</gene>
<reference key="1">
    <citation type="journal article" date="1996" name="Nucleic Acids Res.">
        <title>Complete sequence analysis of the genome of the bacterium Mycoplasma pneumoniae.</title>
        <authorList>
            <person name="Himmelreich R."/>
            <person name="Hilbert H."/>
            <person name="Plagens H."/>
            <person name="Pirkl E."/>
            <person name="Li B.-C."/>
            <person name="Herrmann R."/>
        </authorList>
    </citation>
    <scope>NUCLEOTIDE SEQUENCE [LARGE SCALE GENOMIC DNA]</scope>
    <source>
        <strain>ATCC 29342 / M129 / Subtype 1</strain>
    </source>
</reference>
<organism>
    <name type="scientific">Mycoplasma pneumoniae (strain ATCC 29342 / M129 / Subtype 1)</name>
    <name type="common">Mycoplasmoides pneumoniae</name>
    <dbReference type="NCBI Taxonomy" id="272634"/>
    <lineage>
        <taxon>Bacteria</taxon>
        <taxon>Bacillati</taxon>
        <taxon>Mycoplasmatota</taxon>
        <taxon>Mycoplasmoidales</taxon>
        <taxon>Mycoplasmoidaceae</taxon>
        <taxon>Mycoplasmoides</taxon>
    </lineage>
</organism>
<name>Y068_MYCPN</name>
<sequence>MEKKKLPFGLKNKEKLTAYNDEKIHELHRQLKAKIEAKKAKEKQDSKTKDTDKKVDQTPKVKVPFTKKFSNLWFGIDKEVNKIVWVTSKKLITIFLLIVLVSAIMIGIYFGINHLFIALGVFKGK</sequence>
<evidence type="ECO:0000255" key="1"/>
<evidence type="ECO:0000256" key="2">
    <source>
        <dbReference type="SAM" id="MobiDB-lite"/>
    </source>
</evidence>
<evidence type="ECO:0000305" key="3"/>
<dbReference type="EMBL" id="U00089">
    <property type="protein sequence ID" value="AAB95734.1"/>
    <property type="molecule type" value="Genomic_DNA"/>
</dbReference>
<dbReference type="PIR" id="S73412">
    <property type="entry name" value="S73412"/>
</dbReference>
<dbReference type="RefSeq" id="NP_109756.1">
    <property type="nucleotide sequence ID" value="NC_000912.1"/>
</dbReference>
<dbReference type="SMR" id="P75048"/>
<dbReference type="STRING" id="272634.MPN_068"/>
<dbReference type="EnsemblBacteria" id="AAB95734">
    <property type="protein sequence ID" value="AAB95734"/>
    <property type="gene ID" value="MPN_068"/>
</dbReference>
<dbReference type="KEGG" id="mpn:MPN_068"/>
<dbReference type="PATRIC" id="fig|272634.6.peg.69"/>
<dbReference type="HOGENOM" id="CLU_2012737_0_0_14"/>
<dbReference type="BioCyc" id="MPNE272634:G1GJ3-106-MONOMER"/>
<dbReference type="Proteomes" id="UP000000808">
    <property type="component" value="Chromosome"/>
</dbReference>
<dbReference type="GO" id="GO:0016020">
    <property type="term" value="C:membrane"/>
    <property type="evidence" value="ECO:0007669"/>
    <property type="project" value="UniProtKB-SubCell"/>
</dbReference>
<dbReference type="GO" id="GO:0008320">
    <property type="term" value="F:protein transmembrane transporter activity"/>
    <property type="evidence" value="ECO:0007669"/>
    <property type="project" value="InterPro"/>
</dbReference>
<dbReference type="GO" id="GO:0009306">
    <property type="term" value="P:protein secretion"/>
    <property type="evidence" value="ECO:0007669"/>
    <property type="project" value="InterPro"/>
</dbReference>
<dbReference type="InterPro" id="IPR005807">
    <property type="entry name" value="SecE_bac"/>
</dbReference>
<dbReference type="NCBIfam" id="TIGR00964">
    <property type="entry name" value="secE_bact"/>
    <property type="match status" value="1"/>
</dbReference>
<accession>P75048</accession>
<protein>
    <recommendedName>
        <fullName>Uncharacterized protein MG055 homolog</fullName>
    </recommendedName>
</protein>
<proteinExistence type="predicted"/>